<keyword id="KW-0030">Aminoacyl-tRNA synthetase</keyword>
<keyword id="KW-0067">ATP-binding</keyword>
<keyword id="KW-0963">Cytoplasm</keyword>
<keyword id="KW-0436">Ligase</keyword>
<keyword id="KW-0479">Metal-binding</keyword>
<keyword id="KW-0547">Nucleotide-binding</keyword>
<keyword id="KW-0648">Protein biosynthesis</keyword>
<keyword id="KW-0694">RNA-binding</keyword>
<keyword id="KW-0820">tRNA-binding</keyword>
<keyword id="KW-0862">Zinc</keyword>
<evidence type="ECO:0000255" key="1">
    <source>
        <dbReference type="HAMAP-Rule" id="MF_00036"/>
    </source>
</evidence>
<accession>P61709</accession>
<organism>
    <name type="scientific">Wolbachia pipientis wMel</name>
    <dbReference type="NCBI Taxonomy" id="163164"/>
    <lineage>
        <taxon>Bacteria</taxon>
        <taxon>Pseudomonadati</taxon>
        <taxon>Pseudomonadota</taxon>
        <taxon>Alphaproteobacteria</taxon>
        <taxon>Rickettsiales</taxon>
        <taxon>Anaplasmataceae</taxon>
        <taxon>Wolbachieae</taxon>
        <taxon>Wolbachia</taxon>
    </lineage>
</organism>
<feature type="chain" id="PRO_0000075247" description="Alanine--tRNA ligase">
    <location>
        <begin position="1"/>
        <end position="877"/>
    </location>
</feature>
<feature type="binding site" evidence="1">
    <location>
        <position position="556"/>
    </location>
    <ligand>
        <name>Zn(2+)</name>
        <dbReference type="ChEBI" id="CHEBI:29105"/>
    </ligand>
</feature>
<feature type="binding site" evidence="1">
    <location>
        <position position="560"/>
    </location>
    <ligand>
        <name>Zn(2+)</name>
        <dbReference type="ChEBI" id="CHEBI:29105"/>
    </ligand>
</feature>
<feature type="binding site" evidence="1">
    <location>
        <position position="657"/>
    </location>
    <ligand>
        <name>Zn(2+)</name>
        <dbReference type="ChEBI" id="CHEBI:29105"/>
    </ligand>
</feature>
<feature type="binding site" evidence="1">
    <location>
        <position position="661"/>
    </location>
    <ligand>
        <name>Zn(2+)</name>
        <dbReference type="ChEBI" id="CHEBI:29105"/>
    </ligand>
</feature>
<gene>
    <name evidence="1" type="primary">alaS</name>
    <name type="ordered locus">WD_0862</name>
</gene>
<protein>
    <recommendedName>
        <fullName evidence="1">Alanine--tRNA ligase</fullName>
        <ecNumber evidence="1">6.1.1.7</ecNumber>
    </recommendedName>
    <alternativeName>
        <fullName evidence="1">Alanyl-tRNA synthetase</fullName>
        <shortName evidence="1">AlaRS</shortName>
    </alternativeName>
</protein>
<sequence>MKLNEIRERFIKFFVNNDHEQVSSSPLIPEHDPTLMFTNAGMVQFKNIFTGAQKTEMKRAVSSQKCLRAGGKHNDLENVGYTTRHHTFFEMLGNFSFGDYFKETAIEFAWEFITKELSLDKNRLSITVYHTDDEAYEIWRKISGFSSDKIIRITTDDNFWSMGSTGPCGPCSEIFYDHGSPNLQEGDRIVEIWNLVFMEFNKDEEGNLHKLPKKCIDTGMGLERIAAVMQNVHDNYDIDLFSALISKSQEYCGRTENKIAHKIIADHLRAAAFLIAEGVLPGNEGRNYVLRRLIRRATRYIHLLGYNDSLLHRIFPVLIDSTSSAYMGAELVRAKSLIETTLKSEEENFKDTLMKGINLLEKFTTDLKSGDTLPGESAFKLYDTYGFPLDITLDVLKEKKINFDQKGFDDAMGEQKERARAKWAGSGEKSVEQVWFDLINKFGKTKFVGYEFNEVSDAKILAIVSSKNEVIDSAKEGEKITIILDKTPFYGESGGQVGDTGSLIKSDRSIIIVENTNKVNDLYLHRCIVKFGSICKGNTVAASIDKERRQTLRRNHSATHLLHFTLRKILGDHVTQKGSLVAPDRLRFDFSHNTQMTQDQLFWVEDMVNSLIRENLSASTKIQSMNQAIDEGAMALFGEKYGNQVRVVKIGDSRELCGGTHVEHTGEIGLFKIVTESSVAFGVRRIEALTGQEAINYVRDNEINLKKVAEFVKAPVSEITSRLSILSQEHKKSETKIKNLYKKLVSAENIKSTEINGINFISHTFTDIPANVIREFVLQQQKPKTVIAFTATEKDKTVLIIKVSKDLINKISAKELISIAVKKNCGGNAELAQTGCDSNKIDDAITAIYSKITASKHSTSYHHEPSYRRGANKQRDT</sequence>
<name>SYA_WOLPM</name>
<comment type="function">
    <text evidence="1">Catalyzes the attachment of alanine to tRNA(Ala) in a two-step reaction: alanine is first activated by ATP to form Ala-AMP and then transferred to the acceptor end of tRNA(Ala). Also edits incorrectly charged Ser-tRNA(Ala) and Gly-tRNA(Ala) via its editing domain.</text>
</comment>
<comment type="catalytic activity">
    <reaction evidence="1">
        <text>tRNA(Ala) + L-alanine + ATP = L-alanyl-tRNA(Ala) + AMP + diphosphate</text>
        <dbReference type="Rhea" id="RHEA:12540"/>
        <dbReference type="Rhea" id="RHEA-COMP:9657"/>
        <dbReference type="Rhea" id="RHEA-COMP:9923"/>
        <dbReference type="ChEBI" id="CHEBI:30616"/>
        <dbReference type="ChEBI" id="CHEBI:33019"/>
        <dbReference type="ChEBI" id="CHEBI:57972"/>
        <dbReference type="ChEBI" id="CHEBI:78442"/>
        <dbReference type="ChEBI" id="CHEBI:78497"/>
        <dbReference type="ChEBI" id="CHEBI:456215"/>
        <dbReference type="EC" id="6.1.1.7"/>
    </reaction>
</comment>
<comment type="cofactor">
    <cofactor evidence="1">
        <name>Zn(2+)</name>
        <dbReference type="ChEBI" id="CHEBI:29105"/>
    </cofactor>
    <text evidence="1">Binds 1 zinc ion per subunit.</text>
</comment>
<comment type="subcellular location">
    <subcellularLocation>
        <location evidence="1">Cytoplasm</location>
    </subcellularLocation>
</comment>
<comment type="domain">
    <text evidence="1">Consists of three domains; the N-terminal catalytic domain, the editing domain and the C-terminal C-Ala domain. The editing domain removes incorrectly charged amino acids, while the C-Ala domain, along with tRNA(Ala), serves as a bridge to cooperatively bring together the editing and aminoacylation centers thus stimulating deacylation of misacylated tRNAs.</text>
</comment>
<comment type="similarity">
    <text evidence="1">Belongs to the class-II aminoacyl-tRNA synthetase family.</text>
</comment>
<proteinExistence type="inferred from homology"/>
<reference key="1">
    <citation type="journal article" date="2004" name="PLoS Biol.">
        <title>Phylogenomics of the reproductive parasite Wolbachia pipientis wMel: a streamlined genome overrun by mobile genetic elements.</title>
        <authorList>
            <person name="Wu M."/>
            <person name="Sun L.V."/>
            <person name="Vamathevan J.J."/>
            <person name="Riegler M."/>
            <person name="DeBoy R.T."/>
            <person name="Brownlie J.C."/>
            <person name="McGraw E.A."/>
            <person name="Martin W."/>
            <person name="Esser C."/>
            <person name="Ahmadinejad N."/>
            <person name="Wiegand C."/>
            <person name="Madupu R."/>
            <person name="Beanan M.J."/>
            <person name="Brinkac L.M."/>
            <person name="Daugherty S.C."/>
            <person name="Durkin A.S."/>
            <person name="Kolonay J.F."/>
            <person name="Nelson W.C."/>
            <person name="Mohamoud Y."/>
            <person name="Lee P."/>
            <person name="Berry K.J."/>
            <person name="Young M.B."/>
            <person name="Utterback T.R."/>
            <person name="Weidman J.F."/>
            <person name="Nierman W.C."/>
            <person name="Paulsen I.T."/>
            <person name="Nelson K.E."/>
            <person name="Tettelin H."/>
            <person name="O'Neill S.L."/>
            <person name="Eisen J.A."/>
        </authorList>
    </citation>
    <scope>NUCLEOTIDE SEQUENCE [LARGE SCALE GENOMIC DNA]</scope>
</reference>
<dbReference type="EC" id="6.1.1.7" evidence="1"/>
<dbReference type="EMBL" id="AE017196">
    <property type="protein sequence ID" value="AAS14546.1"/>
    <property type="molecule type" value="Genomic_DNA"/>
</dbReference>
<dbReference type="RefSeq" id="WP_010962889.1">
    <property type="nucleotide sequence ID" value="NZ_OX384529.1"/>
</dbReference>
<dbReference type="SMR" id="P61709"/>
<dbReference type="EnsemblBacteria" id="AAS14546">
    <property type="protein sequence ID" value="AAS14546"/>
    <property type="gene ID" value="WD_0862"/>
</dbReference>
<dbReference type="GeneID" id="70036337"/>
<dbReference type="KEGG" id="wol:WD_0862"/>
<dbReference type="eggNOG" id="COG0013">
    <property type="taxonomic scope" value="Bacteria"/>
</dbReference>
<dbReference type="Proteomes" id="UP000008215">
    <property type="component" value="Chromosome"/>
</dbReference>
<dbReference type="GO" id="GO:0005829">
    <property type="term" value="C:cytosol"/>
    <property type="evidence" value="ECO:0007669"/>
    <property type="project" value="TreeGrafter"/>
</dbReference>
<dbReference type="GO" id="GO:0004813">
    <property type="term" value="F:alanine-tRNA ligase activity"/>
    <property type="evidence" value="ECO:0007669"/>
    <property type="project" value="UniProtKB-UniRule"/>
</dbReference>
<dbReference type="GO" id="GO:0002161">
    <property type="term" value="F:aminoacyl-tRNA deacylase activity"/>
    <property type="evidence" value="ECO:0007669"/>
    <property type="project" value="TreeGrafter"/>
</dbReference>
<dbReference type="GO" id="GO:0005524">
    <property type="term" value="F:ATP binding"/>
    <property type="evidence" value="ECO:0007669"/>
    <property type="project" value="UniProtKB-UniRule"/>
</dbReference>
<dbReference type="GO" id="GO:0000049">
    <property type="term" value="F:tRNA binding"/>
    <property type="evidence" value="ECO:0007669"/>
    <property type="project" value="UniProtKB-KW"/>
</dbReference>
<dbReference type="GO" id="GO:0008270">
    <property type="term" value="F:zinc ion binding"/>
    <property type="evidence" value="ECO:0007669"/>
    <property type="project" value="UniProtKB-UniRule"/>
</dbReference>
<dbReference type="GO" id="GO:0006419">
    <property type="term" value="P:alanyl-tRNA aminoacylation"/>
    <property type="evidence" value="ECO:0007669"/>
    <property type="project" value="UniProtKB-UniRule"/>
</dbReference>
<dbReference type="GO" id="GO:0045892">
    <property type="term" value="P:negative regulation of DNA-templated transcription"/>
    <property type="evidence" value="ECO:0007669"/>
    <property type="project" value="TreeGrafter"/>
</dbReference>
<dbReference type="CDD" id="cd00673">
    <property type="entry name" value="AlaRS_core"/>
    <property type="match status" value="1"/>
</dbReference>
<dbReference type="FunFam" id="3.30.54.20:FF:000001">
    <property type="entry name" value="Alanine--tRNA ligase"/>
    <property type="match status" value="1"/>
</dbReference>
<dbReference type="FunFam" id="3.30.930.10:FF:000004">
    <property type="entry name" value="Alanine--tRNA ligase"/>
    <property type="match status" value="1"/>
</dbReference>
<dbReference type="FunFam" id="3.30.980.10:FF:000004">
    <property type="entry name" value="Alanine--tRNA ligase, cytoplasmic"/>
    <property type="match status" value="1"/>
</dbReference>
<dbReference type="Gene3D" id="2.40.30.130">
    <property type="match status" value="1"/>
</dbReference>
<dbReference type="Gene3D" id="3.10.310.40">
    <property type="match status" value="1"/>
</dbReference>
<dbReference type="Gene3D" id="3.30.54.20">
    <property type="match status" value="1"/>
</dbReference>
<dbReference type="Gene3D" id="6.10.250.550">
    <property type="match status" value="1"/>
</dbReference>
<dbReference type="Gene3D" id="3.30.930.10">
    <property type="entry name" value="Bira Bifunctional Protein, Domain 2"/>
    <property type="match status" value="1"/>
</dbReference>
<dbReference type="Gene3D" id="3.30.980.10">
    <property type="entry name" value="Threonyl-trna Synthetase, Chain A, domain 2"/>
    <property type="match status" value="1"/>
</dbReference>
<dbReference type="HAMAP" id="MF_00036_B">
    <property type="entry name" value="Ala_tRNA_synth_B"/>
    <property type="match status" value="1"/>
</dbReference>
<dbReference type="InterPro" id="IPR045864">
    <property type="entry name" value="aa-tRNA-synth_II/BPL/LPL"/>
</dbReference>
<dbReference type="InterPro" id="IPR002318">
    <property type="entry name" value="Ala-tRNA-lgiase_IIc"/>
</dbReference>
<dbReference type="InterPro" id="IPR018162">
    <property type="entry name" value="Ala-tRNA-ligase_IIc_anticod-bd"/>
</dbReference>
<dbReference type="InterPro" id="IPR018165">
    <property type="entry name" value="Ala-tRNA-synth_IIc_core"/>
</dbReference>
<dbReference type="InterPro" id="IPR018164">
    <property type="entry name" value="Ala-tRNA-synth_IIc_N"/>
</dbReference>
<dbReference type="InterPro" id="IPR050058">
    <property type="entry name" value="Ala-tRNA_ligase"/>
</dbReference>
<dbReference type="InterPro" id="IPR023033">
    <property type="entry name" value="Ala_tRNA_ligase_euk/bac"/>
</dbReference>
<dbReference type="InterPro" id="IPR003156">
    <property type="entry name" value="DHHA1_dom"/>
</dbReference>
<dbReference type="InterPro" id="IPR018163">
    <property type="entry name" value="Thr/Ala-tRNA-synth_IIc_edit"/>
</dbReference>
<dbReference type="InterPro" id="IPR009000">
    <property type="entry name" value="Transl_B-barrel_sf"/>
</dbReference>
<dbReference type="InterPro" id="IPR012947">
    <property type="entry name" value="tRNA_SAD"/>
</dbReference>
<dbReference type="NCBIfam" id="TIGR00344">
    <property type="entry name" value="alaS"/>
    <property type="match status" value="1"/>
</dbReference>
<dbReference type="PANTHER" id="PTHR11777:SF9">
    <property type="entry name" value="ALANINE--TRNA LIGASE, CYTOPLASMIC"/>
    <property type="match status" value="1"/>
</dbReference>
<dbReference type="PANTHER" id="PTHR11777">
    <property type="entry name" value="ALANYL-TRNA SYNTHETASE"/>
    <property type="match status" value="1"/>
</dbReference>
<dbReference type="Pfam" id="PF02272">
    <property type="entry name" value="DHHA1"/>
    <property type="match status" value="1"/>
</dbReference>
<dbReference type="Pfam" id="PF01411">
    <property type="entry name" value="tRNA-synt_2c"/>
    <property type="match status" value="1"/>
</dbReference>
<dbReference type="Pfam" id="PF07973">
    <property type="entry name" value="tRNA_SAD"/>
    <property type="match status" value="1"/>
</dbReference>
<dbReference type="PRINTS" id="PR00980">
    <property type="entry name" value="TRNASYNTHALA"/>
</dbReference>
<dbReference type="SMART" id="SM00863">
    <property type="entry name" value="tRNA_SAD"/>
    <property type="match status" value="1"/>
</dbReference>
<dbReference type="SUPFAM" id="SSF55681">
    <property type="entry name" value="Class II aaRS and biotin synthetases"/>
    <property type="match status" value="1"/>
</dbReference>
<dbReference type="SUPFAM" id="SSF101353">
    <property type="entry name" value="Putative anticodon-binding domain of alanyl-tRNA synthetase (AlaRS)"/>
    <property type="match status" value="1"/>
</dbReference>
<dbReference type="SUPFAM" id="SSF55186">
    <property type="entry name" value="ThrRS/AlaRS common domain"/>
    <property type="match status" value="1"/>
</dbReference>
<dbReference type="SUPFAM" id="SSF50447">
    <property type="entry name" value="Translation proteins"/>
    <property type="match status" value="1"/>
</dbReference>
<dbReference type="PROSITE" id="PS50860">
    <property type="entry name" value="AA_TRNA_LIGASE_II_ALA"/>
    <property type="match status" value="1"/>
</dbReference>